<gene>
    <name type="primary">tkt</name>
    <name type="synonym">tktA</name>
    <name type="ordered locus">TP_0560</name>
</gene>
<comment type="function">
    <text evidence="1">Catalyzes the transfer of a two-carbon ketol group from a ketose donor to an aldose acceptor, via a covalent intermediate with the cofactor thiamine pyrophosphate.</text>
</comment>
<comment type="catalytic activity">
    <reaction>
        <text>D-sedoheptulose 7-phosphate + D-glyceraldehyde 3-phosphate = aldehydo-D-ribose 5-phosphate + D-xylulose 5-phosphate</text>
        <dbReference type="Rhea" id="RHEA:10508"/>
        <dbReference type="ChEBI" id="CHEBI:57483"/>
        <dbReference type="ChEBI" id="CHEBI:57737"/>
        <dbReference type="ChEBI" id="CHEBI:58273"/>
        <dbReference type="ChEBI" id="CHEBI:59776"/>
        <dbReference type="EC" id="2.2.1.1"/>
    </reaction>
</comment>
<comment type="cofactor">
    <cofactor evidence="1">
        <name>Mg(2+)</name>
        <dbReference type="ChEBI" id="CHEBI:18420"/>
    </cofactor>
    <cofactor evidence="1">
        <name>Ca(2+)</name>
        <dbReference type="ChEBI" id="CHEBI:29108"/>
    </cofactor>
    <cofactor evidence="1">
        <name>Mn(2+)</name>
        <dbReference type="ChEBI" id="CHEBI:29035"/>
    </cofactor>
    <cofactor evidence="1">
        <name>Co(2+)</name>
        <dbReference type="ChEBI" id="CHEBI:48828"/>
    </cofactor>
    <text evidence="1">Binds 1 Mg(2+) ion per subunit. Can also utilize other divalent metal cations, such as Ca(2+), Mn(2+) and Co(2+).</text>
</comment>
<comment type="cofactor">
    <cofactor evidence="1">
        <name>thiamine diphosphate</name>
        <dbReference type="ChEBI" id="CHEBI:58937"/>
    </cofactor>
    <text evidence="1">Binds 1 thiamine pyrophosphate per subunit.</text>
</comment>
<comment type="subunit">
    <text evidence="1">Homodimer.</text>
</comment>
<comment type="similarity">
    <text evidence="2">Belongs to the transketolase family.</text>
</comment>
<organism>
    <name type="scientific">Treponema pallidum (strain Nichols)</name>
    <dbReference type="NCBI Taxonomy" id="243276"/>
    <lineage>
        <taxon>Bacteria</taxon>
        <taxon>Pseudomonadati</taxon>
        <taxon>Spirochaetota</taxon>
        <taxon>Spirochaetia</taxon>
        <taxon>Spirochaetales</taxon>
        <taxon>Treponemataceae</taxon>
        <taxon>Treponema</taxon>
    </lineage>
</organism>
<proteinExistence type="inferred from homology"/>
<name>TKT_TREPA</name>
<sequence length="661" mass="71125">MTEEAMRAMALSIRSLTIDAIERANSGHPGLPLGAAELAACLYGTILKHNPANPSWFNRDRFVLSAGHGSMLLYAALHLSGYDVSLEDIKNFRQVGSRCPGHPEYGCTPGVEATTGPLGQGISMAVGFALAEAMLAARFNTDEHAVVDHHTYALVGEGCLMEGVASEASSFAGTMRLGKLIVFYDENHISIDGSTDLTFSEDVAKRYEAYGWQVLRGSMYSYTDIMDLTACAKRDDRPSLIILRSIIGKGAPTVEGSARAHGAPLGEAGVREAKKALGLDPACSFFVAPELTAVLQKRKCECAHVEDSWNELFEAWSTQYPEKRADWDAAFVPGGVSTSQLARVVCPHFEKGSSLATRTASGKVLDALCSVLPNLVGGSADLRGPNAVAVSSLRPFSAEHRAGGYCYFGVREFAMAAIVNGMQLHGGLRAFGATFMVFSDYFRPALRLAALMRIPSVFVLTHDSIFVGEDGPTHQPVETLAALRAIPNVLVLRPADAEETFEAWKIALLHRSGPVCIVLSRQNVPVFEKSDSSWRSTVEESGAYVVREGGATPELTVLASGSEVDLALRAAQLSKRRVRVVSVLCKERFEAAGDEVQRRIQGGARVVVAEAGVYQGWGAWAKREKCLVLDRFGXSGPGTQVAQALEFTAEALVEIILDWLA</sequence>
<reference key="1">
    <citation type="journal article" date="1998" name="Science">
        <title>Complete genome sequence of Treponema pallidum, the syphilis spirochete.</title>
        <authorList>
            <person name="Fraser C.M."/>
            <person name="Norris S.J."/>
            <person name="Weinstock G.M."/>
            <person name="White O."/>
            <person name="Sutton G.G."/>
            <person name="Dodson R.J."/>
            <person name="Gwinn M.L."/>
            <person name="Hickey E.K."/>
            <person name="Clayton R.A."/>
            <person name="Ketchum K.A."/>
            <person name="Sodergren E."/>
            <person name="Hardham J.M."/>
            <person name="McLeod M.P."/>
            <person name="Salzberg S.L."/>
            <person name="Peterson J.D."/>
            <person name="Khalak H.G."/>
            <person name="Richardson D.L."/>
            <person name="Howell J.K."/>
            <person name="Chidambaram M."/>
            <person name="Utterback T.R."/>
            <person name="McDonald L.A."/>
            <person name="Artiach P."/>
            <person name="Bowman C."/>
            <person name="Cotton M.D."/>
            <person name="Fujii C."/>
            <person name="Garland S.A."/>
            <person name="Hatch B."/>
            <person name="Horst K."/>
            <person name="Roberts K.M."/>
            <person name="Sandusky M."/>
            <person name="Weidman J.F."/>
            <person name="Smith H.O."/>
            <person name="Venter J.C."/>
        </authorList>
    </citation>
    <scope>NUCLEOTIDE SEQUENCE [LARGE SCALE GENOMIC DNA]</scope>
    <source>
        <strain>Nichols</strain>
    </source>
</reference>
<dbReference type="EC" id="2.2.1.1"/>
<dbReference type="EMBL" id="AE000520">
    <property type="protein sequence ID" value="AAC26564.1"/>
    <property type="molecule type" value="Genomic_DNA"/>
</dbReference>
<dbReference type="PIR" id="D71310">
    <property type="entry name" value="D71310"/>
</dbReference>
<dbReference type="RefSeq" id="WP_010882007.1">
    <property type="nucleotide sequence ID" value="NC_000919.1"/>
</dbReference>
<dbReference type="STRING" id="243276.TP_0560"/>
<dbReference type="EnsemblBacteria" id="AAC26564">
    <property type="protein sequence ID" value="AAC26564"/>
    <property type="gene ID" value="TP_0560"/>
</dbReference>
<dbReference type="KEGG" id="tpa:TP_0560"/>
<dbReference type="PATRIC" id="fig|243276.5.peg.600"/>
<dbReference type="eggNOG" id="COG0021">
    <property type="taxonomic scope" value="Bacteria"/>
</dbReference>
<dbReference type="HOGENOM" id="CLU_009227_0_0_12"/>
<dbReference type="OrthoDB" id="8732661at2"/>
<dbReference type="Proteomes" id="UP000000811">
    <property type="component" value="Chromosome"/>
</dbReference>
<dbReference type="GO" id="GO:0005829">
    <property type="term" value="C:cytosol"/>
    <property type="evidence" value="ECO:0007669"/>
    <property type="project" value="TreeGrafter"/>
</dbReference>
<dbReference type="GO" id="GO:0046872">
    <property type="term" value="F:metal ion binding"/>
    <property type="evidence" value="ECO:0007669"/>
    <property type="project" value="UniProtKB-KW"/>
</dbReference>
<dbReference type="GO" id="GO:0004802">
    <property type="term" value="F:transketolase activity"/>
    <property type="evidence" value="ECO:0007669"/>
    <property type="project" value="UniProtKB-EC"/>
</dbReference>
<dbReference type="GO" id="GO:0006098">
    <property type="term" value="P:pentose-phosphate shunt"/>
    <property type="evidence" value="ECO:0007669"/>
    <property type="project" value="TreeGrafter"/>
</dbReference>
<dbReference type="CDD" id="cd07033">
    <property type="entry name" value="TPP_PYR_DXS_TK_like"/>
    <property type="match status" value="1"/>
</dbReference>
<dbReference type="CDD" id="cd02012">
    <property type="entry name" value="TPP_TK"/>
    <property type="match status" value="1"/>
</dbReference>
<dbReference type="FunFam" id="3.40.50.970:FF:000003">
    <property type="entry name" value="Transketolase"/>
    <property type="match status" value="1"/>
</dbReference>
<dbReference type="FunFam" id="3.40.50.970:FF:000004">
    <property type="entry name" value="Transketolase"/>
    <property type="match status" value="1"/>
</dbReference>
<dbReference type="Gene3D" id="3.40.50.920">
    <property type="match status" value="1"/>
</dbReference>
<dbReference type="Gene3D" id="3.40.50.970">
    <property type="match status" value="2"/>
</dbReference>
<dbReference type="InterPro" id="IPR029061">
    <property type="entry name" value="THDP-binding"/>
</dbReference>
<dbReference type="InterPro" id="IPR009014">
    <property type="entry name" value="Transketo_C/PFOR_II"/>
</dbReference>
<dbReference type="InterPro" id="IPR055152">
    <property type="entry name" value="Transketolase-like_C_2"/>
</dbReference>
<dbReference type="InterPro" id="IPR005475">
    <property type="entry name" value="Transketolase-like_Pyr-bd"/>
</dbReference>
<dbReference type="InterPro" id="IPR005478">
    <property type="entry name" value="Transketolase_bac-like"/>
</dbReference>
<dbReference type="InterPro" id="IPR020826">
    <property type="entry name" value="Transketolase_BS"/>
</dbReference>
<dbReference type="InterPro" id="IPR049557">
    <property type="entry name" value="Transketolase_CS"/>
</dbReference>
<dbReference type="InterPro" id="IPR033247">
    <property type="entry name" value="Transketolase_fam"/>
</dbReference>
<dbReference type="InterPro" id="IPR005474">
    <property type="entry name" value="Transketolase_N"/>
</dbReference>
<dbReference type="NCBIfam" id="TIGR00232">
    <property type="entry name" value="tktlase_bact"/>
    <property type="match status" value="1"/>
</dbReference>
<dbReference type="PANTHER" id="PTHR43522">
    <property type="entry name" value="TRANSKETOLASE"/>
    <property type="match status" value="1"/>
</dbReference>
<dbReference type="PANTHER" id="PTHR43522:SF10">
    <property type="entry name" value="TRANSKETOLASE"/>
    <property type="match status" value="1"/>
</dbReference>
<dbReference type="Pfam" id="PF02779">
    <property type="entry name" value="Transket_pyr"/>
    <property type="match status" value="1"/>
</dbReference>
<dbReference type="Pfam" id="PF22613">
    <property type="entry name" value="Transketolase_C_1"/>
    <property type="match status" value="1"/>
</dbReference>
<dbReference type="Pfam" id="PF00456">
    <property type="entry name" value="Transketolase_N"/>
    <property type="match status" value="1"/>
</dbReference>
<dbReference type="SMART" id="SM00861">
    <property type="entry name" value="Transket_pyr"/>
    <property type="match status" value="1"/>
</dbReference>
<dbReference type="SUPFAM" id="SSF52518">
    <property type="entry name" value="Thiamin diphosphate-binding fold (THDP-binding)"/>
    <property type="match status" value="2"/>
</dbReference>
<dbReference type="SUPFAM" id="SSF52922">
    <property type="entry name" value="TK C-terminal domain-like"/>
    <property type="match status" value="1"/>
</dbReference>
<dbReference type="PROSITE" id="PS00801">
    <property type="entry name" value="TRANSKETOLASE_1"/>
    <property type="match status" value="1"/>
</dbReference>
<dbReference type="PROSITE" id="PS00802">
    <property type="entry name" value="TRANSKETOLASE_2"/>
    <property type="match status" value="1"/>
</dbReference>
<feature type="chain" id="PRO_0000191879" description="Transketolase">
    <location>
        <begin position="1"/>
        <end position="661"/>
    </location>
</feature>
<feature type="active site" description="Proton donor" evidence="1">
    <location>
        <position position="412"/>
    </location>
</feature>
<feature type="binding site" evidence="1">
    <location>
        <position position="28"/>
    </location>
    <ligand>
        <name>substrate</name>
    </ligand>
</feature>
<feature type="binding site" evidence="1">
    <location>
        <position position="68"/>
    </location>
    <ligand>
        <name>thiamine diphosphate</name>
        <dbReference type="ChEBI" id="CHEBI:58937"/>
    </ligand>
</feature>
<feature type="binding site" evidence="1">
    <location>
        <begin position="116"/>
        <end position="118"/>
    </location>
    <ligand>
        <name>thiamine diphosphate</name>
        <dbReference type="ChEBI" id="CHEBI:58937"/>
    </ligand>
</feature>
<feature type="binding site" evidence="1">
    <location>
        <position position="157"/>
    </location>
    <ligand>
        <name>Mg(2+)</name>
        <dbReference type="ChEBI" id="CHEBI:18420"/>
    </ligand>
</feature>
<feature type="binding site" evidence="1">
    <location>
        <position position="158"/>
    </location>
    <ligand>
        <name>thiamine diphosphate</name>
        <dbReference type="ChEBI" id="CHEBI:58937"/>
    </ligand>
</feature>
<feature type="binding site" evidence="1">
    <location>
        <position position="187"/>
    </location>
    <ligand>
        <name>Mg(2+)</name>
        <dbReference type="ChEBI" id="CHEBI:18420"/>
    </ligand>
</feature>
<feature type="binding site" evidence="1">
    <location>
        <position position="187"/>
    </location>
    <ligand>
        <name>thiamine diphosphate</name>
        <dbReference type="ChEBI" id="CHEBI:58937"/>
    </ligand>
</feature>
<feature type="binding site" evidence="1">
    <location>
        <position position="189"/>
    </location>
    <ligand>
        <name>Mg(2+)</name>
        <dbReference type="ChEBI" id="CHEBI:18420"/>
    </ligand>
</feature>
<feature type="binding site" evidence="1">
    <location>
        <position position="261"/>
    </location>
    <ligand>
        <name>substrate</name>
    </ligand>
</feature>
<feature type="binding site" evidence="1">
    <location>
        <position position="261"/>
    </location>
    <ligand>
        <name>thiamine diphosphate</name>
        <dbReference type="ChEBI" id="CHEBI:58937"/>
    </ligand>
</feature>
<feature type="binding site" evidence="1">
    <location>
        <position position="358"/>
    </location>
    <ligand>
        <name>substrate</name>
    </ligand>
</feature>
<feature type="binding site" evidence="1">
    <location>
        <position position="438"/>
    </location>
    <ligand>
        <name>thiamine diphosphate</name>
        <dbReference type="ChEBI" id="CHEBI:58937"/>
    </ligand>
</feature>
<feature type="binding site" evidence="1">
    <location>
        <position position="462"/>
    </location>
    <ligand>
        <name>substrate</name>
    </ligand>
</feature>
<feature type="binding site" evidence="1">
    <location>
        <position position="470"/>
    </location>
    <ligand>
        <name>substrate</name>
    </ligand>
</feature>
<feature type="binding site" evidence="1">
    <location>
        <position position="521"/>
    </location>
    <ligand>
        <name>substrate</name>
    </ligand>
</feature>
<feature type="site" description="Important for catalytic activity" evidence="1">
    <location>
        <position position="28"/>
    </location>
</feature>
<feature type="site" description="Important for catalytic activity" evidence="1">
    <location>
        <position position="261"/>
    </location>
</feature>
<keyword id="KW-0106">Calcium</keyword>
<keyword id="KW-0460">Magnesium</keyword>
<keyword id="KW-0479">Metal-binding</keyword>
<keyword id="KW-1185">Reference proteome</keyword>
<keyword id="KW-0786">Thiamine pyrophosphate</keyword>
<keyword id="KW-0808">Transferase</keyword>
<accession>O83571</accession>
<protein>
    <recommendedName>
        <fullName>Transketolase</fullName>
        <shortName>TK</shortName>
        <ecNumber>2.2.1.1</ecNumber>
    </recommendedName>
</protein>
<evidence type="ECO:0000250" key="1"/>
<evidence type="ECO:0000305" key="2"/>